<protein>
    <recommendedName>
        <fullName evidence="1">Ribosomal protein L11 methyltransferase</fullName>
        <shortName evidence="1">L11 Mtase</shortName>
        <ecNumber evidence="1">2.1.1.-</ecNumber>
    </recommendedName>
</protein>
<sequence length="304" mass="34468">MIQSTEFFWWKFELVFPPDVEESFLWFLNMAGIKSYAIERSPDNLQDQTLMVWLPSHEWLKKDREEFENSLLALNKAFREDVLNTKWEKIIDEDWSSSWKKFWKADPVGSKILILPSWLELPDIYSNRIVIKLDPGSAFGTGSHPTTRLCLEDLERNPPLGKKVVDIGCGSGVLGIAAIKLGAKEVRAIDIDSLAVRATSENIVLNNLSQKQLSVSLGSIENLANQLNPLSADLLICNTLSPVIKELAPYFFKLTHSYSRLCLSGLLVAQVEDITNFLSILGWELIDSYSSDNWALIRLCRNHP</sequence>
<reference key="1">
    <citation type="journal article" date="2003" name="Proc. Natl. Acad. Sci. U.S.A.">
        <title>Genome sequence of the cyanobacterium Prochlorococcus marinus SS120, a nearly minimal oxyphototrophic genome.</title>
        <authorList>
            <person name="Dufresne A."/>
            <person name="Salanoubat M."/>
            <person name="Partensky F."/>
            <person name="Artiguenave F."/>
            <person name="Axmann I.M."/>
            <person name="Barbe V."/>
            <person name="Duprat S."/>
            <person name="Galperin M.Y."/>
            <person name="Koonin E.V."/>
            <person name="Le Gall F."/>
            <person name="Makarova K.S."/>
            <person name="Ostrowski M."/>
            <person name="Oztas S."/>
            <person name="Robert C."/>
            <person name="Rogozin I.B."/>
            <person name="Scanlan D.J."/>
            <person name="Tandeau de Marsac N."/>
            <person name="Weissenbach J."/>
            <person name="Wincker P."/>
            <person name="Wolf Y.I."/>
            <person name="Hess W.R."/>
        </authorList>
    </citation>
    <scope>NUCLEOTIDE SEQUENCE [LARGE SCALE GENOMIC DNA]</scope>
    <source>
        <strain>SARG / CCMP1375 / SS120</strain>
    </source>
</reference>
<dbReference type="EC" id="2.1.1.-" evidence="1"/>
<dbReference type="EMBL" id="AE017126">
    <property type="protein sequence ID" value="AAQ00479.1"/>
    <property type="molecule type" value="Genomic_DNA"/>
</dbReference>
<dbReference type="RefSeq" id="NP_875826.1">
    <property type="nucleotide sequence ID" value="NC_005042.1"/>
</dbReference>
<dbReference type="RefSeq" id="WP_011125586.1">
    <property type="nucleotide sequence ID" value="NC_005042.1"/>
</dbReference>
<dbReference type="SMR" id="Q7VAM5"/>
<dbReference type="STRING" id="167539.Pro_1435"/>
<dbReference type="EnsemblBacteria" id="AAQ00479">
    <property type="protein sequence ID" value="AAQ00479"/>
    <property type="gene ID" value="Pro_1435"/>
</dbReference>
<dbReference type="KEGG" id="pma:Pro_1435"/>
<dbReference type="PATRIC" id="fig|167539.5.peg.1502"/>
<dbReference type="eggNOG" id="COG2264">
    <property type="taxonomic scope" value="Bacteria"/>
</dbReference>
<dbReference type="HOGENOM" id="CLU_049382_0_1_3"/>
<dbReference type="OrthoDB" id="9785995at2"/>
<dbReference type="Proteomes" id="UP000001420">
    <property type="component" value="Chromosome"/>
</dbReference>
<dbReference type="GO" id="GO:0005737">
    <property type="term" value="C:cytoplasm"/>
    <property type="evidence" value="ECO:0007669"/>
    <property type="project" value="UniProtKB-SubCell"/>
</dbReference>
<dbReference type="GO" id="GO:0016279">
    <property type="term" value="F:protein-lysine N-methyltransferase activity"/>
    <property type="evidence" value="ECO:0007669"/>
    <property type="project" value="RHEA"/>
</dbReference>
<dbReference type="GO" id="GO:0032259">
    <property type="term" value="P:methylation"/>
    <property type="evidence" value="ECO:0007669"/>
    <property type="project" value="UniProtKB-KW"/>
</dbReference>
<dbReference type="CDD" id="cd02440">
    <property type="entry name" value="AdoMet_MTases"/>
    <property type="match status" value="1"/>
</dbReference>
<dbReference type="Gene3D" id="3.40.50.150">
    <property type="entry name" value="Vaccinia Virus protein VP39"/>
    <property type="match status" value="1"/>
</dbReference>
<dbReference type="HAMAP" id="MF_00735">
    <property type="entry name" value="Methyltr_PrmA"/>
    <property type="match status" value="1"/>
</dbReference>
<dbReference type="InterPro" id="IPR050078">
    <property type="entry name" value="Ribosomal_L11_MeTrfase_PrmA"/>
</dbReference>
<dbReference type="InterPro" id="IPR004498">
    <property type="entry name" value="Ribosomal_PrmA_MeTrfase"/>
</dbReference>
<dbReference type="InterPro" id="IPR029063">
    <property type="entry name" value="SAM-dependent_MTases_sf"/>
</dbReference>
<dbReference type="NCBIfam" id="TIGR00406">
    <property type="entry name" value="prmA"/>
    <property type="match status" value="1"/>
</dbReference>
<dbReference type="PANTHER" id="PTHR43648">
    <property type="entry name" value="ELECTRON TRANSFER FLAVOPROTEIN BETA SUBUNIT LYSINE METHYLTRANSFERASE"/>
    <property type="match status" value="1"/>
</dbReference>
<dbReference type="PANTHER" id="PTHR43648:SF1">
    <property type="entry name" value="ELECTRON TRANSFER FLAVOPROTEIN BETA SUBUNIT LYSINE METHYLTRANSFERASE"/>
    <property type="match status" value="1"/>
</dbReference>
<dbReference type="Pfam" id="PF06325">
    <property type="entry name" value="PrmA"/>
    <property type="match status" value="1"/>
</dbReference>
<dbReference type="PIRSF" id="PIRSF000401">
    <property type="entry name" value="RPL11_MTase"/>
    <property type="match status" value="1"/>
</dbReference>
<dbReference type="SUPFAM" id="SSF53335">
    <property type="entry name" value="S-adenosyl-L-methionine-dependent methyltransferases"/>
    <property type="match status" value="1"/>
</dbReference>
<comment type="function">
    <text evidence="1">Methylates ribosomal protein L11.</text>
</comment>
<comment type="catalytic activity">
    <reaction evidence="1">
        <text>L-lysyl-[protein] + 3 S-adenosyl-L-methionine = N(6),N(6),N(6)-trimethyl-L-lysyl-[protein] + 3 S-adenosyl-L-homocysteine + 3 H(+)</text>
        <dbReference type="Rhea" id="RHEA:54192"/>
        <dbReference type="Rhea" id="RHEA-COMP:9752"/>
        <dbReference type="Rhea" id="RHEA-COMP:13826"/>
        <dbReference type="ChEBI" id="CHEBI:15378"/>
        <dbReference type="ChEBI" id="CHEBI:29969"/>
        <dbReference type="ChEBI" id="CHEBI:57856"/>
        <dbReference type="ChEBI" id="CHEBI:59789"/>
        <dbReference type="ChEBI" id="CHEBI:61961"/>
    </reaction>
</comment>
<comment type="subcellular location">
    <subcellularLocation>
        <location evidence="1">Cytoplasm</location>
    </subcellularLocation>
</comment>
<comment type="similarity">
    <text evidence="1">Belongs to the methyltransferase superfamily. PrmA family.</text>
</comment>
<proteinExistence type="inferred from homology"/>
<organism>
    <name type="scientific">Prochlorococcus marinus (strain SARG / CCMP1375 / SS120)</name>
    <dbReference type="NCBI Taxonomy" id="167539"/>
    <lineage>
        <taxon>Bacteria</taxon>
        <taxon>Bacillati</taxon>
        <taxon>Cyanobacteriota</taxon>
        <taxon>Cyanophyceae</taxon>
        <taxon>Synechococcales</taxon>
        <taxon>Prochlorococcaceae</taxon>
        <taxon>Prochlorococcus</taxon>
    </lineage>
</organism>
<gene>
    <name evidence="1" type="primary">prmA</name>
    <name type="ordered locus">Pro_1435</name>
</gene>
<feature type="chain" id="PRO_0000192289" description="Ribosomal protein L11 methyltransferase">
    <location>
        <begin position="1"/>
        <end position="304"/>
    </location>
</feature>
<feature type="binding site" evidence="1">
    <location>
        <position position="147"/>
    </location>
    <ligand>
        <name>S-adenosyl-L-methionine</name>
        <dbReference type="ChEBI" id="CHEBI:59789"/>
    </ligand>
</feature>
<feature type="binding site" evidence="1">
    <location>
        <position position="168"/>
    </location>
    <ligand>
        <name>S-adenosyl-L-methionine</name>
        <dbReference type="ChEBI" id="CHEBI:59789"/>
    </ligand>
</feature>
<feature type="binding site" evidence="1">
    <location>
        <position position="190"/>
    </location>
    <ligand>
        <name>S-adenosyl-L-methionine</name>
        <dbReference type="ChEBI" id="CHEBI:59789"/>
    </ligand>
</feature>
<feature type="binding site" evidence="1">
    <location>
        <position position="238"/>
    </location>
    <ligand>
        <name>S-adenosyl-L-methionine</name>
        <dbReference type="ChEBI" id="CHEBI:59789"/>
    </ligand>
</feature>
<name>PRMA_PROMA</name>
<keyword id="KW-0963">Cytoplasm</keyword>
<keyword id="KW-0489">Methyltransferase</keyword>
<keyword id="KW-1185">Reference proteome</keyword>
<keyword id="KW-0949">S-adenosyl-L-methionine</keyword>
<keyword id="KW-0808">Transferase</keyword>
<accession>Q7VAM5</accession>
<evidence type="ECO:0000255" key="1">
    <source>
        <dbReference type="HAMAP-Rule" id="MF_00735"/>
    </source>
</evidence>